<organism>
    <name type="scientific">Shewanella denitrificans (strain OS217 / ATCC BAA-1090 / DSM 15013)</name>
    <dbReference type="NCBI Taxonomy" id="318161"/>
    <lineage>
        <taxon>Bacteria</taxon>
        <taxon>Pseudomonadati</taxon>
        <taxon>Pseudomonadota</taxon>
        <taxon>Gammaproteobacteria</taxon>
        <taxon>Alteromonadales</taxon>
        <taxon>Shewanellaceae</taxon>
        <taxon>Shewanella</taxon>
    </lineage>
</organism>
<comment type="function">
    <text evidence="1">Required for the formation of a threonylcarbamoyl group on adenosine at position 37 (t(6)A37) in tRNAs that read codons beginning with adenine. Is involved in the transfer of the threonylcarbamoyl moiety of threonylcarbamoyl-AMP (TC-AMP) to the N6 group of A37, together with TsaE and TsaB. TsaD likely plays a direct catalytic role in this reaction.</text>
</comment>
<comment type="catalytic activity">
    <reaction evidence="1">
        <text>L-threonylcarbamoyladenylate + adenosine(37) in tRNA = N(6)-L-threonylcarbamoyladenosine(37) in tRNA + AMP + H(+)</text>
        <dbReference type="Rhea" id="RHEA:37059"/>
        <dbReference type="Rhea" id="RHEA-COMP:10162"/>
        <dbReference type="Rhea" id="RHEA-COMP:10163"/>
        <dbReference type="ChEBI" id="CHEBI:15378"/>
        <dbReference type="ChEBI" id="CHEBI:73682"/>
        <dbReference type="ChEBI" id="CHEBI:74411"/>
        <dbReference type="ChEBI" id="CHEBI:74418"/>
        <dbReference type="ChEBI" id="CHEBI:456215"/>
        <dbReference type="EC" id="2.3.1.234"/>
    </reaction>
</comment>
<comment type="cofactor">
    <cofactor evidence="1">
        <name>Fe(2+)</name>
        <dbReference type="ChEBI" id="CHEBI:29033"/>
    </cofactor>
    <text evidence="1">Binds 1 Fe(2+) ion per subunit.</text>
</comment>
<comment type="subcellular location">
    <subcellularLocation>
        <location evidence="1">Cytoplasm</location>
    </subcellularLocation>
</comment>
<comment type="similarity">
    <text evidence="1">Belongs to the KAE1 / TsaD family.</text>
</comment>
<protein>
    <recommendedName>
        <fullName evidence="1">tRNA N6-adenosine threonylcarbamoyltransferase</fullName>
        <ecNumber evidence="1">2.3.1.234</ecNumber>
    </recommendedName>
    <alternativeName>
        <fullName evidence="1">N6-L-threonylcarbamoyladenine synthase</fullName>
        <shortName evidence="1">t(6)A synthase</shortName>
    </alternativeName>
    <alternativeName>
        <fullName evidence="1">t(6)A37 threonylcarbamoyladenosine biosynthesis protein TsaD</fullName>
    </alternativeName>
    <alternativeName>
        <fullName evidence="1">tRNA threonylcarbamoyladenosine biosynthesis protein TsaD</fullName>
    </alternativeName>
</protein>
<reference key="1">
    <citation type="submission" date="2006-03" db="EMBL/GenBank/DDBJ databases">
        <title>Complete sequence of Shewanella denitrificans OS217.</title>
        <authorList>
            <consortium name="US DOE Joint Genome Institute"/>
            <person name="Copeland A."/>
            <person name="Lucas S."/>
            <person name="Lapidus A."/>
            <person name="Barry K."/>
            <person name="Detter J.C."/>
            <person name="Glavina del Rio T."/>
            <person name="Hammon N."/>
            <person name="Israni S."/>
            <person name="Dalin E."/>
            <person name="Tice H."/>
            <person name="Pitluck S."/>
            <person name="Brettin T."/>
            <person name="Bruce D."/>
            <person name="Han C."/>
            <person name="Tapia R."/>
            <person name="Gilna P."/>
            <person name="Kiss H."/>
            <person name="Schmutz J."/>
            <person name="Larimer F."/>
            <person name="Land M."/>
            <person name="Hauser L."/>
            <person name="Kyrpides N."/>
            <person name="Lykidis A."/>
            <person name="Richardson P."/>
        </authorList>
    </citation>
    <scope>NUCLEOTIDE SEQUENCE [LARGE SCALE GENOMIC DNA]</scope>
    <source>
        <strain>OS217 / ATCC BAA-1090 / DSM 15013</strain>
    </source>
</reference>
<dbReference type="EC" id="2.3.1.234" evidence="1"/>
<dbReference type="EMBL" id="CP000302">
    <property type="protein sequence ID" value="ABE56109.1"/>
    <property type="molecule type" value="Genomic_DNA"/>
</dbReference>
<dbReference type="RefSeq" id="WP_011497259.1">
    <property type="nucleotide sequence ID" value="NC_007954.1"/>
</dbReference>
<dbReference type="SMR" id="Q12KB7"/>
<dbReference type="STRING" id="318161.Sden_2830"/>
<dbReference type="KEGG" id="sdn:Sden_2830"/>
<dbReference type="eggNOG" id="COG0533">
    <property type="taxonomic scope" value="Bacteria"/>
</dbReference>
<dbReference type="HOGENOM" id="CLU_023208_0_0_6"/>
<dbReference type="OrthoDB" id="9806197at2"/>
<dbReference type="Proteomes" id="UP000001982">
    <property type="component" value="Chromosome"/>
</dbReference>
<dbReference type="GO" id="GO:0005737">
    <property type="term" value="C:cytoplasm"/>
    <property type="evidence" value="ECO:0007669"/>
    <property type="project" value="UniProtKB-SubCell"/>
</dbReference>
<dbReference type="GO" id="GO:0005506">
    <property type="term" value="F:iron ion binding"/>
    <property type="evidence" value="ECO:0007669"/>
    <property type="project" value="UniProtKB-UniRule"/>
</dbReference>
<dbReference type="GO" id="GO:0061711">
    <property type="term" value="F:N(6)-L-threonylcarbamoyladenine synthase activity"/>
    <property type="evidence" value="ECO:0007669"/>
    <property type="project" value="UniProtKB-EC"/>
</dbReference>
<dbReference type="GO" id="GO:0002949">
    <property type="term" value="P:tRNA threonylcarbamoyladenosine modification"/>
    <property type="evidence" value="ECO:0007669"/>
    <property type="project" value="UniProtKB-UniRule"/>
</dbReference>
<dbReference type="CDD" id="cd24133">
    <property type="entry name" value="ASKHA_NBD_TsaD_bac"/>
    <property type="match status" value="1"/>
</dbReference>
<dbReference type="FunFam" id="3.30.420.40:FF:000031">
    <property type="entry name" value="tRNA N6-adenosine threonylcarbamoyltransferase"/>
    <property type="match status" value="1"/>
</dbReference>
<dbReference type="Gene3D" id="3.30.420.40">
    <property type="match status" value="2"/>
</dbReference>
<dbReference type="HAMAP" id="MF_01445">
    <property type="entry name" value="TsaD"/>
    <property type="match status" value="1"/>
</dbReference>
<dbReference type="InterPro" id="IPR043129">
    <property type="entry name" value="ATPase_NBD"/>
</dbReference>
<dbReference type="InterPro" id="IPR000905">
    <property type="entry name" value="Gcp-like_dom"/>
</dbReference>
<dbReference type="InterPro" id="IPR017861">
    <property type="entry name" value="KAE1/TsaD"/>
</dbReference>
<dbReference type="InterPro" id="IPR017860">
    <property type="entry name" value="Peptidase_M22_CS"/>
</dbReference>
<dbReference type="InterPro" id="IPR022450">
    <property type="entry name" value="TsaD"/>
</dbReference>
<dbReference type="NCBIfam" id="TIGR00329">
    <property type="entry name" value="gcp_kae1"/>
    <property type="match status" value="1"/>
</dbReference>
<dbReference type="NCBIfam" id="TIGR03723">
    <property type="entry name" value="T6A_TsaD_YgjD"/>
    <property type="match status" value="1"/>
</dbReference>
<dbReference type="PANTHER" id="PTHR11735">
    <property type="entry name" value="TRNA N6-ADENOSINE THREONYLCARBAMOYLTRANSFERASE"/>
    <property type="match status" value="1"/>
</dbReference>
<dbReference type="PANTHER" id="PTHR11735:SF6">
    <property type="entry name" value="TRNA N6-ADENOSINE THREONYLCARBAMOYLTRANSFERASE, MITOCHONDRIAL"/>
    <property type="match status" value="1"/>
</dbReference>
<dbReference type="Pfam" id="PF00814">
    <property type="entry name" value="TsaD"/>
    <property type="match status" value="1"/>
</dbReference>
<dbReference type="PRINTS" id="PR00789">
    <property type="entry name" value="OSIALOPTASE"/>
</dbReference>
<dbReference type="SUPFAM" id="SSF53067">
    <property type="entry name" value="Actin-like ATPase domain"/>
    <property type="match status" value="2"/>
</dbReference>
<dbReference type="PROSITE" id="PS01016">
    <property type="entry name" value="GLYCOPROTEASE"/>
    <property type="match status" value="1"/>
</dbReference>
<evidence type="ECO:0000255" key="1">
    <source>
        <dbReference type="HAMAP-Rule" id="MF_01445"/>
    </source>
</evidence>
<proteinExistence type="inferred from homology"/>
<sequence length="338" mass="36211">MRVLGIETSCDETGIAVYDDKLGLLSHKLYSQVKLHADYGGVVPELASRDHVRKIVPLIKQALLDANTSANELDGVAYTKGPGLIGALLVGACVGRSLAYAWGKPAVGVHHMEGHLLAPMLEDDAPEYPFVALLVSGGHSMLVKVDGIGRYEVLGESVDDAAGEAFDKTAKLMGLDYPGGPRLAKLASEGVPAGYKFPRPMTDRPGLDFSFSGLKTFTANTIMAEPDDHQTRANIARAFEEAVVDTLAIKCRRALKQTGYNRLVIAGGVSANTRLRETLAELMTSLGGRVYYPRGEFCTDNGAMIAYAGLQRLKAGQVEDLSVKGQPRWPLDSLPAVD</sequence>
<feature type="chain" id="PRO_0000303532" description="tRNA N6-adenosine threonylcarbamoyltransferase">
    <location>
        <begin position="1"/>
        <end position="338"/>
    </location>
</feature>
<feature type="binding site" evidence="1">
    <location>
        <position position="111"/>
    </location>
    <ligand>
        <name>Fe cation</name>
        <dbReference type="ChEBI" id="CHEBI:24875"/>
    </ligand>
</feature>
<feature type="binding site" evidence="1">
    <location>
        <position position="115"/>
    </location>
    <ligand>
        <name>Fe cation</name>
        <dbReference type="ChEBI" id="CHEBI:24875"/>
    </ligand>
</feature>
<feature type="binding site" evidence="1">
    <location>
        <begin position="134"/>
        <end position="138"/>
    </location>
    <ligand>
        <name>substrate</name>
    </ligand>
</feature>
<feature type="binding site" evidence="1">
    <location>
        <position position="167"/>
    </location>
    <ligand>
        <name>substrate</name>
    </ligand>
</feature>
<feature type="binding site" evidence="1">
    <location>
        <position position="180"/>
    </location>
    <ligand>
        <name>substrate</name>
    </ligand>
</feature>
<feature type="binding site" evidence="1">
    <location>
        <position position="272"/>
    </location>
    <ligand>
        <name>substrate</name>
    </ligand>
</feature>
<feature type="binding site" evidence="1">
    <location>
        <position position="300"/>
    </location>
    <ligand>
        <name>Fe cation</name>
        <dbReference type="ChEBI" id="CHEBI:24875"/>
    </ligand>
</feature>
<keyword id="KW-0012">Acyltransferase</keyword>
<keyword id="KW-0963">Cytoplasm</keyword>
<keyword id="KW-0408">Iron</keyword>
<keyword id="KW-0479">Metal-binding</keyword>
<keyword id="KW-1185">Reference proteome</keyword>
<keyword id="KW-0808">Transferase</keyword>
<keyword id="KW-0819">tRNA processing</keyword>
<name>TSAD_SHEDO</name>
<accession>Q12KB7</accession>
<gene>
    <name evidence="1" type="primary">tsaD</name>
    <name type="synonym">gcp</name>
    <name type="ordered locus">Sden_2830</name>
</gene>